<proteinExistence type="inferred from homology"/>
<gene>
    <name type="primary">CRRSP1</name>
    <name type="ordered locus">At1g61750</name>
    <name type="ORF">T13M11.11</name>
</gene>
<protein>
    <recommendedName>
        <fullName>Cysteine-rich repeat secretory protein 1</fullName>
    </recommendedName>
</protein>
<comment type="subcellular location">
    <subcellularLocation>
        <location evidence="4">Secreted</location>
    </subcellularLocation>
</comment>
<comment type="similarity">
    <text evidence="4">Belongs to the cysteine-rich repeat secretory protein family.</text>
</comment>
<comment type="sequence caution" evidence="4">
    <conflict type="erroneous gene model prediction">
        <sequence resource="EMBL-CDS" id="AAD21420"/>
    </conflict>
</comment>
<organism>
    <name type="scientific">Arabidopsis thaliana</name>
    <name type="common">Mouse-ear cress</name>
    <dbReference type="NCBI Taxonomy" id="3702"/>
    <lineage>
        <taxon>Eukaryota</taxon>
        <taxon>Viridiplantae</taxon>
        <taxon>Streptophyta</taxon>
        <taxon>Embryophyta</taxon>
        <taxon>Tracheophyta</taxon>
        <taxon>Spermatophyta</taxon>
        <taxon>Magnoliopsida</taxon>
        <taxon>eudicotyledons</taxon>
        <taxon>Gunneridae</taxon>
        <taxon>Pentapetalae</taxon>
        <taxon>rosids</taxon>
        <taxon>malvids</taxon>
        <taxon>Brassicales</taxon>
        <taxon>Brassicaceae</taxon>
        <taxon>Camelineae</taxon>
        <taxon>Arabidopsis</taxon>
    </lineage>
</organism>
<keyword id="KW-1015">Disulfide bond</keyword>
<keyword id="KW-1185">Reference proteome</keyword>
<keyword id="KW-0677">Repeat</keyword>
<keyword id="KW-0964">Secreted</keyword>
<keyword id="KW-0732">Signal</keyword>
<name>CRRS1_ARATH</name>
<dbReference type="EMBL" id="AC005882">
    <property type="protein sequence ID" value="AAD21420.1"/>
    <property type="status" value="ALT_SEQ"/>
    <property type="molecule type" value="Genomic_DNA"/>
</dbReference>
<dbReference type="EMBL" id="CP002684">
    <property type="protein sequence ID" value="AEE33882.1"/>
    <property type="molecule type" value="Genomic_DNA"/>
</dbReference>
<dbReference type="PIR" id="C96643">
    <property type="entry name" value="C96643"/>
</dbReference>
<dbReference type="RefSeq" id="NP_176368.4">
    <property type="nucleotide sequence ID" value="NM_104857.5"/>
</dbReference>
<dbReference type="SMR" id="Q9SYB1"/>
<dbReference type="iPTMnet" id="Q9SYB1"/>
<dbReference type="PaxDb" id="3702-AT1G61750.1"/>
<dbReference type="ProteomicsDB" id="222682"/>
<dbReference type="EnsemblPlants" id="AT1G61750.1">
    <property type="protein sequence ID" value="AT1G61750.1"/>
    <property type="gene ID" value="AT1G61750"/>
</dbReference>
<dbReference type="GeneID" id="842472"/>
<dbReference type="Gramene" id="AT1G61750.1">
    <property type="protein sequence ID" value="AT1G61750.1"/>
    <property type="gene ID" value="AT1G61750"/>
</dbReference>
<dbReference type="KEGG" id="ath:AT1G61750"/>
<dbReference type="Araport" id="AT1G61750"/>
<dbReference type="TAIR" id="AT1G61750"/>
<dbReference type="eggNOG" id="ENOG502QWDY">
    <property type="taxonomic scope" value="Eukaryota"/>
</dbReference>
<dbReference type="HOGENOM" id="CLU_000288_35_0_1"/>
<dbReference type="InParanoid" id="Q9SYB1"/>
<dbReference type="OMA" id="KRFALVY"/>
<dbReference type="PRO" id="PR:Q9SYB1"/>
<dbReference type="Proteomes" id="UP000006548">
    <property type="component" value="Chromosome 1"/>
</dbReference>
<dbReference type="ExpressionAtlas" id="Q9SYB1">
    <property type="expression patterns" value="baseline and differential"/>
</dbReference>
<dbReference type="GO" id="GO:0005576">
    <property type="term" value="C:extracellular region"/>
    <property type="evidence" value="ECO:0007669"/>
    <property type="project" value="UniProtKB-SubCell"/>
</dbReference>
<dbReference type="CDD" id="cd23509">
    <property type="entry name" value="Gnk2-like"/>
    <property type="match status" value="2"/>
</dbReference>
<dbReference type="FunFam" id="3.30.430.20:FF:000003">
    <property type="entry name" value="Cysteine-rich RLK (RECEPTOR-like protein kinase) 10"/>
    <property type="match status" value="1"/>
</dbReference>
<dbReference type="Gene3D" id="3.30.430.20">
    <property type="entry name" value="Gnk2 domain, C-X8-C-X2-C motif"/>
    <property type="match status" value="2"/>
</dbReference>
<dbReference type="InterPro" id="IPR054603">
    <property type="entry name" value="CR_prot_dom_plant"/>
</dbReference>
<dbReference type="InterPro" id="IPR002902">
    <property type="entry name" value="GNK2"/>
</dbReference>
<dbReference type="InterPro" id="IPR038408">
    <property type="entry name" value="GNK2_sf"/>
</dbReference>
<dbReference type="PANTHER" id="PTHR32099">
    <property type="entry name" value="CYSTEINE-RICH REPEAT SECRETORY PROTEIN"/>
    <property type="match status" value="1"/>
</dbReference>
<dbReference type="PANTHER" id="PTHR32099:SF105">
    <property type="entry name" value="CYSTEINE-RICH REPEAT SECRETORY PROTEIN 1"/>
    <property type="match status" value="1"/>
</dbReference>
<dbReference type="Pfam" id="PF22812">
    <property type="entry name" value="CR_prot_dom_plant"/>
    <property type="match status" value="1"/>
</dbReference>
<dbReference type="Pfam" id="PF01657">
    <property type="entry name" value="Stress-antifung"/>
    <property type="match status" value="2"/>
</dbReference>
<dbReference type="PROSITE" id="PS51473">
    <property type="entry name" value="GNK2"/>
    <property type="match status" value="2"/>
</dbReference>
<evidence type="ECO:0000255" key="1"/>
<evidence type="ECO:0000255" key="2">
    <source>
        <dbReference type="PROSITE-ProRule" id="PRU00806"/>
    </source>
</evidence>
<evidence type="ECO:0000256" key="3">
    <source>
        <dbReference type="SAM" id="MobiDB-lite"/>
    </source>
</evidence>
<evidence type="ECO:0000305" key="4"/>
<feature type="signal peptide" evidence="1">
    <location>
        <begin position="1"/>
        <end position="25"/>
    </location>
</feature>
<feature type="chain" id="PRO_0000296129" description="Cysteine-rich repeat secretory protein 1">
    <location>
        <begin position="26"/>
        <end position="341"/>
    </location>
</feature>
<feature type="domain" description="Gnk2-homologous 1" evidence="2">
    <location>
        <begin position="28"/>
        <end position="131"/>
    </location>
</feature>
<feature type="domain" description="Gnk2-homologous 2" evidence="2">
    <location>
        <begin position="136"/>
        <end position="245"/>
    </location>
</feature>
<feature type="region of interest" description="Disordered" evidence="3">
    <location>
        <begin position="247"/>
        <end position="274"/>
    </location>
</feature>
<feature type="compositionally biased region" description="Pro residues" evidence="3">
    <location>
        <begin position="247"/>
        <end position="262"/>
    </location>
</feature>
<feature type="disulfide bond" evidence="2">
    <location>
        <begin position="85"/>
        <end position="94"/>
    </location>
</feature>
<feature type="disulfide bond" evidence="2">
    <location>
        <begin position="97"/>
        <end position="122"/>
    </location>
</feature>
<feature type="disulfide bond" evidence="2">
    <location>
        <begin position="199"/>
        <end position="208"/>
    </location>
</feature>
<feature type="disulfide bond" evidence="2">
    <location>
        <begin position="211"/>
        <end position="236"/>
    </location>
</feature>
<reference key="1">
    <citation type="journal article" date="2000" name="Nature">
        <title>Sequence and analysis of chromosome 1 of the plant Arabidopsis thaliana.</title>
        <authorList>
            <person name="Theologis A."/>
            <person name="Ecker J.R."/>
            <person name="Palm C.J."/>
            <person name="Federspiel N.A."/>
            <person name="Kaul S."/>
            <person name="White O."/>
            <person name="Alonso J."/>
            <person name="Altafi H."/>
            <person name="Araujo R."/>
            <person name="Bowman C.L."/>
            <person name="Brooks S.Y."/>
            <person name="Buehler E."/>
            <person name="Chan A."/>
            <person name="Chao Q."/>
            <person name="Chen H."/>
            <person name="Cheuk R.F."/>
            <person name="Chin C.W."/>
            <person name="Chung M.K."/>
            <person name="Conn L."/>
            <person name="Conway A.B."/>
            <person name="Conway A.R."/>
            <person name="Creasy T.H."/>
            <person name="Dewar K."/>
            <person name="Dunn P."/>
            <person name="Etgu P."/>
            <person name="Feldblyum T.V."/>
            <person name="Feng J.-D."/>
            <person name="Fong B."/>
            <person name="Fujii C.Y."/>
            <person name="Gill J.E."/>
            <person name="Goldsmith A.D."/>
            <person name="Haas B."/>
            <person name="Hansen N.F."/>
            <person name="Hughes B."/>
            <person name="Huizar L."/>
            <person name="Hunter J.L."/>
            <person name="Jenkins J."/>
            <person name="Johnson-Hopson C."/>
            <person name="Khan S."/>
            <person name="Khaykin E."/>
            <person name="Kim C.J."/>
            <person name="Koo H.L."/>
            <person name="Kremenetskaia I."/>
            <person name="Kurtz D.B."/>
            <person name="Kwan A."/>
            <person name="Lam B."/>
            <person name="Langin-Hooper S."/>
            <person name="Lee A."/>
            <person name="Lee J.M."/>
            <person name="Lenz C.A."/>
            <person name="Li J.H."/>
            <person name="Li Y.-P."/>
            <person name="Lin X."/>
            <person name="Liu S.X."/>
            <person name="Liu Z.A."/>
            <person name="Luros J.S."/>
            <person name="Maiti R."/>
            <person name="Marziali A."/>
            <person name="Militscher J."/>
            <person name="Miranda M."/>
            <person name="Nguyen M."/>
            <person name="Nierman W.C."/>
            <person name="Osborne B.I."/>
            <person name="Pai G."/>
            <person name="Peterson J."/>
            <person name="Pham P.K."/>
            <person name="Rizzo M."/>
            <person name="Rooney T."/>
            <person name="Rowley D."/>
            <person name="Sakano H."/>
            <person name="Salzberg S.L."/>
            <person name="Schwartz J.R."/>
            <person name="Shinn P."/>
            <person name="Southwick A.M."/>
            <person name="Sun H."/>
            <person name="Tallon L.J."/>
            <person name="Tambunga G."/>
            <person name="Toriumi M.J."/>
            <person name="Town C.D."/>
            <person name="Utterback T."/>
            <person name="Van Aken S."/>
            <person name="Vaysberg M."/>
            <person name="Vysotskaia V.S."/>
            <person name="Walker M."/>
            <person name="Wu D."/>
            <person name="Yu G."/>
            <person name="Fraser C.M."/>
            <person name="Venter J.C."/>
            <person name="Davis R.W."/>
        </authorList>
    </citation>
    <scope>NUCLEOTIDE SEQUENCE [LARGE SCALE GENOMIC DNA]</scope>
    <source>
        <strain>cv. Columbia</strain>
    </source>
</reference>
<reference key="2">
    <citation type="journal article" date="2017" name="Plant J.">
        <title>Araport11: a complete reannotation of the Arabidopsis thaliana reference genome.</title>
        <authorList>
            <person name="Cheng C.Y."/>
            <person name="Krishnakumar V."/>
            <person name="Chan A.P."/>
            <person name="Thibaud-Nissen F."/>
            <person name="Schobel S."/>
            <person name="Town C.D."/>
        </authorList>
    </citation>
    <scope>GENOME REANNOTATION</scope>
    <source>
        <strain>cv. Columbia</strain>
    </source>
</reference>
<reference key="3">
    <citation type="journal article" date="2001" name="Plant Physiol.">
        <title>A superfamily of proteins with novel cysteine-rich repeats.</title>
        <authorList>
            <person name="Chen Z."/>
        </authorList>
    </citation>
    <scope>GENE FAMILY ORGANIZATION</scope>
    <scope>NOMENCLATURE</scope>
</reference>
<sequence length="341" mass="38617">MFSLPLHQSKLIFLLSFLLIKTLNAQPTYLLSYCYTSGNYTPNSSYKSNLDTLISVLDSQSSNKGFYSYASGSSPTTTVYGSYLCRGDISSSTCETCISRASKNVFIWCPVQKEAIIWYEECFLRYSSRKIFSILDQGPFVTWTSYDTTLYQFYFINTVEYRMDRLIQEAYSSSSYFAEETYHVSYLGEVYDLNGLVQCTPDLNQYDCYRCLKSAYNETKDCCYGKRFALVYSSNCMLTYKATFLAPPPPPPPPPPPPPPPQRLYGENDTPSSDESFSFKLGKVFRRIIAPVIAAVVIILVISVCSLCCCCIKKKKKANQREASIEIPTLNTGENLTVDHQ</sequence>
<accession>Q9SYB1</accession>
<accession>F4HVF3</accession>